<dbReference type="EMBL" id="AC016757">
    <property type="protein sequence ID" value="AAY24334.1"/>
    <property type="molecule type" value="Genomic_DNA"/>
</dbReference>
<dbReference type="EMBL" id="BC031945">
    <property type="status" value="NOT_ANNOTATED_CDS"/>
    <property type="molecule type" value="mRNA"/>
</dbReference>
<dbReference type="BioGRID" id="134348">
    <property type="interactions" value="2"/>
</dbReference>
<dbReference type="FunCoup" id="Q8NEE0">
    <property type="interactions" value="1"/>
</dbReference>
<dbReference type="BioMuta" id="HGNC:31018"/>
<dbReference type="AGR" id="HGNC:31018"/>
<dbReference type="GeneCards" id="KLHL30-AS1"/>
<dbReference type="HGNC" id="HGNC:31018">
    <property type="gene designation" value="KLHL30-AS1"/>
</dbReference>
<dbReference type="neXtProt" id="NX_Q8NEE0"/>
<dbReference type="InParanoid" id="Q8NEE0"/>
<dbReference type="PAN-GO" id="Q8NEE0">
    <property type="GO annotations" value="0 GO annotations based on evolutionary models"/>
</dbReference>
<dbReference type="PathwayCommons" id="Q8NEE0"/>
<dbReference type="Pharos" id="Q8NEE0">
    <property type="development level" value="Tdark"/>
</dbReference>
<dbReference type="Proteomes" id="UP000005640">
    <property type="component" value="Unplaced"/>
</dbReference>
<dbReference type="RNAct" id="Q8NEE0">
    <property type="molecule type" value="protein"/>
</dbReference>
<feature type="chain" id="PRO_0000266031" description="Putative uncharacterized protein KLHL30-AS1">
    <location>
        <begin position="1"/>
        <end position="82"/>
    </location>
</feature>
<feature type="region of interest" description="Disordered" evidence="1">
    <location>
        <begin position="22"/>
        <end position="82"/>
    </location>
</feature>
<feature type="compositionally biased region" description="Basic and acidic residues" evidence="1">
    <location>
        <begin position="47"/>
        <end position="58"/>
    </location>
</feature>
<feature type="compositionally biased region" description="Pro residues" evidence="1">
    <location>
        <begin position="73"/>
        <end position="82"/>
    </location>
</feature>
<organism>
    <name type="scientific">Homo sapiens</name>
    <name type="common">Human</name>
    <dbReference type="NCBI Taxonomy" id="9606"/>
    <lineage>
        <taxon>Eukaryota</taxon>
        <taxon>Metazoa</taxon>
        <taxon>Chordata</taxon>
        <taxon>Craniata</taxon>
        <taxon>Vertebrata</taxon>
        <taxon>Euteleostomi</taxon>
        <taxon>Mammalia</taxon>
        <taxon>Eutheria</taxon>
        <taxon>Euarchontoglires</taxon>
        <taxon>Primates</taxon>
        <taxon>Haplorrhini</taxon>
        <taxon>Catarrhini</taxon>
        <taxon>Hominidae</taxon>
        <taxon>Homo</taxon>
    </lineage>
</organism>
<proteinExistence type="uncertain"/>
<evidence type="ECO:0000256" key="1">
    <source>
        <dbReference type="SAM" id="MobiDB-lite"/>
    </source>
</evidence>
<evidence type="ECO:0000305" key="2"/>
<comment type="caution">
    <text evidence="2">Product of a dubious CDS prediction.</text>
</comment>
<sequence length="82" mass="9662">MCLRSHFKVAFTQRKVELSKELRRSRSSRNGGLPLQEQPMGQKWGWHRGEPGHPRMEELNEWPQNGDHWSRKWPPPCAFTPG</sequence>
<protein>
    <recommendedName>
        <fullName>Putative uncharacterized protein KLHL30-AS1</fullName>
    </recommendedName>
    <alternativeName>
        <fullName>KLHL30 antisense RNA 1</fullName>
    </alternativeName>
</protein>
<accession>Q8NEE0</accession>
<keyword id="KW-1185">Reference proteome</keyword>
<reference key="1">
    <citation type="journal article" date="2005" name="Nature">
        <title>Generation and annotation of the DNA sequences of human chromosomes 2 and 4.</title>
        <authorList>
            <person name="Hillier L.W."/>
            <person name="Graves T.A."/>
            <person name="Fulton R.S."/>
            <person name="Fulton L.A."/>
            <person name="Pepin K.H."/>
            <person name="Minx P."/>
            <person name="Wagner-McPherson C."/>
            <person name="Layman D."/>
            <person name="Wylie K."/>
            <person name="Sekhon M."/>
            <person name="Becker M.C."/>
            <person name="Fewell G.A."/>
            <person name="Delehaunty K.D."/>
            <person name="Miner T.L."/>
            <person name="Nash W.E."/>
            <person name="Kremitzki C."/>
            <person name="Oddy L."/>
            <person name="Du H."/>
            <person name="Sun H."/>
            <person name="Bradshaw-Cordum H."/>
            <person name="Ali J."/>
            <person name="Carter J."/>
            <person name="Cordes M."/>
            <person name="Harris A."/>
            <person name="Isak A."/>
            <person name="van Brunt A."/>
            <person name="Nguyen C."/>
            <person name="Du F."/>
            <person name="Courtney L."/>
            <person name="Kalicki J."/>
            <person name="Ozersky P."/>
            <person name="Abbott S."/>
            <person name="Armstrong J."/>
            <person name="Belter E.A."/>
            <person name="Caruso L."/>
            <person name="Cedroni M."/>
            <person name="Cotton M."/>
            <person name="Davidson T."/>
            <person name="Desai A."/>
            <person name="Elliott G."/>
            <person name="Erb T."/>
            <person name="Fronick C."/>
            <person name="Gaige T."/>
            <person name="Haakenson W."/>
            <person name="Haglund K."/>
            <person name="Holmes A."/>
            <person name="Harkins R."/>
            <person name="Kim K."/>
            <person name="Kruchowski S.S."/>
            <person name="Strong C.M."/>
            <person name="Grewal N."/>
            <person name="Goyea E."/>
            <person name="Hou S."/>
            <person name="Levy A."/>
            <person name="Martinka S."/>
            <person name="Mead K."/>
            <person name="McLellan M.D."/>
            <person name="Meyer R."/>
            <person name="Randall-Maher J."/>
            <person name="Tomlinson C."/>
            <person name="Dauphin-Kohlberg S."/>
            <person name="Kozlowicz-Reilly A."/>
            <person name="Shah N."/>
            <person name="Swearengen-Shahid S."/>
            <person name="Snider J."/>
            <person name="Strong J.T."/>
            <person name="Thompson J."/>
            <person name="Yoakum M."/>
            <person name="Leonard S."/>
            <person name="Pearman C."/>
            <person name="Trani L."/>
            <person name="Radionenko M."/>
            <person name="Waligorski J.E."/>
            <person name="Wang C."/>
            <person name="Rock S.M."/>
            <person name="Tin-Wollam A.-M."/>
            <person name="Maupin R."/>
            <person name="Latreille P."/>
            <person name="Wendl M.C."/>
            <person name="Yang S.-P."/>
            <person name="Pohl C."/>
            <person name="Wallis J.W."/>
            <person name="Spieth J."/>
            <person name="Bieri T.A."/>
            <person name="Berkowicz N."/>
            <person name="Nelson J.O."/>
            <person name="Osborne J."/>
            <person name="Ding L."/>
            <person name="Meyer R."/>
            <person name="Sabo A."/>
            <person name="Shotland Y."/>
            <person name="Sinha P."/>
            <person name="Wohldmann P.E."/>
            <person name="Cook L.L."/>
            <person name="Hickenbotham M.T."/>
            <person name="Eldred J."/>
            <person name="Williams D."/>
            <person name="Jones T.A."/>
            <person name="She X."/>
            <person name="Ciccarelli F.D."/>
            <person name="Izaurralde E."/>
            <person name="Taylor J."/>
            <person name="Schmutz J."/>
            <person name="Myers R.M."/>
            <person name="Cox D.R."/>
            <person name="Huang X."/>
            <person name="McPherson J.D."/>
            <person name="Mardis E.R."/>
            <person name="Clifton S.W."/>
            <person name="Warren W.C."/>
            <person name="Chinwalla A.T."/>
            <person name="Eddy S.R."/>
            <person name="Marra M.A."/>
            <person name="Ovcharenko I."/>
            <person name="Furey T.S."/>
            <person name="Miller W."/>
            <person name="Eichler E.E."/>
            <person name="Bork P."/>
            <person name="Suyama M."/>
            <person name="Torrents D."/>
            <person name="Waterston R.H."/>
            <person name="Wilson R.K."/>
        </authorList>
    </citation>
    <scope>NUCLEOTIDE SEQUENCE [LARGE SCALE GENOMIC DNA]</scope>
</reference>
<reference key="2">
    <citation type="journal article" date="2004" name="Genome Res.">
        <title>The status, quality, and expansion of the NIH full-length cDNA project: the Mammalian Gene Collection (MGC).</title>
        <authorList>
            <consortium name="The MGC Project Team"/>
        </authorList>
    </citation>
    <scope>NUCLEOTIDE SEQUENCE [LARGE SCALE MRNA]</scope>
    <source>
        <tissue>Testis</tissue>
    </source>
</reference>
<name>KLAS1_HUMAN</name>
<gene>
    <name type="primary">KLHL30-AS1</name>
    <name type="synonym">C2orf19</name>
</gene>